<feature type="chain" id="PRO_0000050143" description="Glycine-rich protein GRP33">
    <location>
        <begin position="1"/>
        <end position="308"/>
    </location>
</feature>
<feature type="domain" description="KH" evidence="1">
    <location>
        <begin position="83"/>
        <end position="118"/>
    </location>
</feature>
<feature type="region of interest" description="Disordered" evidence="2">
    <location>
        <begin position="203"/>
        <end position="222"/>
    </location>
</feature>
<feature type="region of interest" description="Disordered" evidence="2">
    <location>
        <begin position="270"/>
        <end position="308"/>
    </location>
</feature>
<feature type="compositionally biased region" description="Gly residues" evidence="2">
    <location>
        <begin position="203"/>
        <end position="220"/>
    </location>
</feature>
<feature type="compositionally biased region" description="Gly residues" evidence="2">
    <location>
        <begin position="273"/>
        <end position="294"/>
    </location>
</feature>
<reference key="1">
    <citation type="journal article" date="1987" name="J. Biol. Chem.">
        <title>Cloning of a full-length complementary DNA for an Artemia salina glycine-rich protein. Structural relationship with RNA binding proteins.</title>
        <authorList>
            <person name="Cruz-Alvarez M."/>
            <person name="Pellicer A."/>
        </authorList>
    </citation>
    <scope>NUCLEOTIDE SEQUENCE [MRNA]</scope>
</reference>
<accession>P13230</accession>
<evidence type="ECO:0000255" key="1">
    <source>
        <dbReference type="PROSITE-ProRule" id="PRU00117"/>
    </source>
</evidence>
<evidence type="ECO:0000256" key="2">
    <source>
        <dbReference type="SAM" id="MobiDB-lite"/>
    </source>
</evidence>
<dbReference type="EMBL" id="J03453">
    <property type="protein sequence ID" value="AAC83400.1"/>
    <property type="molecule type" value="mRNA"/>
</dbReference>
<dbReference type="PIR" id="A29379">
    <property type="entry name" value="A29379"/>
</dbReference>
<dbReference type="SMR" id="P13230"/>
<dbReference type="GO" id="GO:0005634">
    <property type="term" value="C:nucleus"/>
    <property type="evidence" value="ECO:0007669"/>
    <property type="project" value="TreeGrafter"/>
</dbReference>
<dbReference type="GO" id="GO:1990904">
    <property type="term" value="C:ribonucleoprotein complex"/>
    <property type="evidence" value="ECO:0007669"/>
    <property type="project" value="UniProtKB-KW"/>
</dbReference>
<dbReference type="GO" id="GO:0003729">
    <property type="term" value="F:mRNA binding"/>
    <property type="evidence" value="ECO:0007669"/>
    <property type="project" value="TreeGrafter"/>
</dbReference>
<dbReference type="GO" id="GO:0000381">
    <property type="term" value="P:regulation of alternative mRNA splicing, via spliceosome"/>
    <property type="evidence" value="ECO:0007669"/>
    <property type="project" value="TreeGrafter"/>
</dbReference>
<dbReference type="CDD" id="cd22384">
    <property type="entry name" value="KH-I_KHDRBS"/>
    <property type="match status" value="1"/>
</dbReference>
<dbReference type="Gene3D" id="3.30.1370.10">
    <property type="entry name" value="K Homology domain, type 1"/>
    <property type="match status" value="1"/>
</dbReference>
<dbReference type="InterPro" id="IPR045071">
    <property type="entry name" value="BBP-like"/>
</dbReference>
<dbReference type="InterPro" id="IPR055256">
    <property type="entry name" value="KH_1_KHDC4/BBP-like"/>
</dbReference>
<dbReference type="InterPro" id="IPR004087">
    <property type="entry name" value="KH_dom"/>
</dbReference>
<dbReference type="InterPro" id="IPR036612">
    <property type="entry name" value="KH_dom_type_1_sf"/>
</dbReference>
<dbReference type="PANTHER" id="PTHR11208:SF42">
    <property type="entry name" value="QUAKING RELATED 54B, ISOFORM E"/>
    <property type="match status" value="1"/>
</dbReference>
<dbReference type="PANTHER" id="PTHR11208">
    <property type="entry name" value="RNA-BINDING PROTEIN RELATED"/>
    <property type="match status" value="1"/>
</dbReference>
<dbReference type="Pfam" id="PF22675">
    <property type="entry name" value="KH-I_KHDC4-BBP"/>
    <property type="match status" value="1"/>
</dbReference>
<dbReference type="SMART" id="SM00322">
    <property type="entry name" value="KH"/>
    <property type="match status" value="1"/>
</dbReference>
<dbReference type="SUPFAM" id="SSF54791">
    <property type="entry name" value="Eukaryotic type KH-domain (KH-domain type I)"/>
    <property type="match status" value="1"/>
</dbReference>
<dbReference type="PROSITE" id="PS50084">
    <property type="entry name" value="KH_TYPE_1"/>
    <property type="match status" value="1"/>
</dbReference>
<organism>
    <name type="scientific">Artemia salina</name>
    <name type="common">Brine shrimp</name>
    <dbReference type="NCBI Taxonomy" id="85549"/>
    <lineage>
        <taxon>Eukaryota</taxon>
        <taxon>Metazoa</taxon>
        <taxon>Ecdysozoa</taxon>
        <taxon>Arthropoda</taxon>
        <taxon>Crustacea</taxon>
        <taxon>Branchiopoda</taxon>
        <taxon>Anostraca</taxon>
        <taxon>Artemiidae</taxon>
        <taxon>Artemia</taxon>
    </lineage>
</organism>
<keyword id="KW-0488">Methylation</keyword>
<keyword id="KW-0687">Ribonucleoprotein</keyword>
<keyword id="KW-0694">RNA-binding</keyword>
<name>GRP33_ARTSA</name>
<comment type="PTM">
    <text>The arginines in the Gly-rich domain might be methylated.</text>
</comment>
<sequence>MAAKPEQEPVYVRDLVKDYDDARQMLTQAGVSEAVLGTIDAEIKHIKTGSRPKTVPNTDGSGFMDLYNDTKVKLVSRCCLPVDQFPKYNFLGKLLGPGGSTMKQLQDETMTKISILGRGSMRDRNKEEELRNSGDVKYAHLNEQLHIEIISIASPAEAHARMAYALTEIKKYITPEEDPNYMMMAGHGAGPMMGMGGMMGGPGPMGPQGRGRGRGRGGFSGPDRTFDLLEKARMNTSETMDPGYGFDESYCGMGGGYEMPYNGNAGWTASPGRGAGAGARGARGGLDQSRGGGKFPSARGGRGRAAPY</sequence>
<proteinExistence type="evidence at transcript level"/>
<protein>
    <recommendedName>
        <fullName>Glycine-rich protein GRP33</fullName>
    </recommendedName>
</protein>